<name>RL24_PROMM</name>
<organism>
    <name type="scientific">Prochlorococcus marinus (strain MIT 9313)</name>
    <dbReference type="NCBI Taxonomy" id="74547"/>
    <lineage>
        <taxon>Bacteria</taxon>
        <taxon>Bacillati</taxon>
        <taxon>Cyanobacteriota</taxon>
        <taxon>Cyanophyceae</taxon>
        <taxon>Synechococcales</taxon>
        <taxon>Prochlorococcaceae</taxon>
        <taxon>Prochlorococcus</taxon>
    </lineage>
</organism>
<evidence type="ECO:0000255" key="1">
    <source>
        <dbReference type="HAMAP-Rule" id="MF_01326"/>
    </source>
</evidence>
<evidence type="ECO:0000305" key="2"/>
<protein>
    <recommendedName>
        <fullName evidence="1">Large ribosomal subunit protein uL24</fullName>
    </recommendedName>
    <alternativeName>
        <fullName evidence="2">50S ribosomal protein L24</fullName>
    </alternativeName>
</protein>
<dbReference type="EMBL" id="BX548175">
    <property type="protein sequence ID" value="CAE21918.1"/>
    <property type="molecule type" value="Genomic_DNA"/>
</dbReference>
<dbReference type="RefSeq" id="WP_011131110.1">
    <property type="nucleotide sequence ID" value="NC_005071.1"/>
</dbReference>
<dbReference type="SMR" id="Q7V534"/>
<dbReference type="KEGG" id="pmt:PMT_1743"/>
<dbReference type="eggNOG" id="COG0198">
    <property type="taxonomic scope" value="Bacteria"/>
</dbReference>
<dbReference type="HOGENOM" id="CLU_093315_2_3_3"/>
<dbReference type="OrthoDB" id="9807419at2"/>
<dbReference type="Proteomes" id="UP000001423">
    <property type="component" value="Chromosome"/>
</dbReference>
<dbReference type="GO" id="GO:1990904">
    <property type="term" value="C:ribonucleoprotein complex"/>
    <property type="evidence" value="ECO:0007669"/>
    <property type="project" value="UniProtKB-KW"/>
</dbReference>
<dbReference type="GO" id="GO:0005840">
    <property type="term" value="C:ribosome"/>
    <property type="evidence" value="ECO:0007669"/>
    <property type="project" value="UniProtKB-KW"/>
</dbReference>
<dbReference type="GO" id="GO:0019843">
    <property type="term" value="F:rRNA binding"/>
    <property type="evidence" value="ECO:0007669"/>
    <property type="project" value="UniProtKB-UniRule"/>
</dbReference>
<dbReference type="GO" id="GO:0003735">
    <property type="term" value="F:structural constituent of ribosome"/>
    <property type="evidence" value="ECO:0007669"/>
    <property type="project" value="InterPro"/>
</dbReference>
<dbReference type="GO" id="GO:0006412">
    <property type="term" value="P:translation"/>
    <property type="evidence" value="ECO:0007669"/>
    <property type="project" value="UniProtKB-UniRule"/>
</dbReference>
<dbReference type="CDD" id="cd06089">
    <property type="entry name" value="KOW_RPL26"/>
    <property type="match status" value="1"/>
</dbReference>
<dbReference type="Gene3D" id="2.30.30.30">
    <property type="match status" value="1"/>
</dbReference>
<dbReference type="HAMAP" id="MF_01326_B">
    <property type="entry name" value="Ribosomal_uL24_B"/>
    <property type="match status" value="1"/>
</dbReference>
<dbReference type="InterPro" id="IPR005824">
    <property type="entry name" value="KOW"/>
</dbReference>
<dbReference type="InterPro" id="IPR014722">
    <property type="entry name" value="Rib_uL2_dom2"/>
</dbReference>
<dbReference type="InterPro" id="IPR003256">
    <property type="entry name" value="Ribosomal_uL24"/>
</dbReference>
<dbReference type="InterPro" id="IPR005825">
    <property type="entry name" value="Ribosomal_uL24_CS"/>
</dbReference>
<dbReference type="InterPro" id="IPR041988">
    <property type="entry name" value="Ribosomal_uL24_KOW"/>
</dbReference>
<dbReference type="InterPro" id="IPR008991">
    <property type="entry name" value="Translation_prot_SH3-like_sf"/>
</dbReference>
<dbReference type="NCBIfam" id="TIGR01079">
    <property type="entry name" value="rplX_bact"/>
    <property type="match status" value="1"/>
</dbReference>
<dbReference type="PANTHER" id="PTHR12903">
    <property type="entry name" value="MITOCHONDRIAL RIBOSOMAL PROTEIN L24"/>
    <property type="match status" value="1"/>
</dbReference>
<dbReference type="Pfam" id="PF00467">
    <property type="entry name" value="KOW"/>
    <property type="match status" value="1"/>
</dbReference>
<dbReference type="Pfam" id="PF17136">
    <property type="entry name" value="ribosomal_L24"/>
    <property type="match status" value="1"/>
</dbReference>
<dbReference type="SMART" id="SM00739">
    <property type="entry name" value="KOW"/>
    <property type="match status" value="1"/>
</dbReference>
<dbReference type="SUPFAM" id="SSF50104">
    <property type="entry name" value="Translation proteins SH3-like domain"/>
    <property type="match status" value="1"/>
</dbReference>
<dbReference type="PROSITE" id="PS01108">
    <property type="entry name" value="RIBOSOMAL_L24"/>
    <property type="match status" value="1"/>
</dbReference>
<feature type="chain" id="PRO_0000130694" description="Large ribosomal subunit protein uL24">
    <location>
        <begin position="1"/>
        <end position="118"/>
    </location>
</feature>
<sequence length="118" mass="13238">MPIATPKQKTTQRIKMRIHKGDTVQVITGKDKGKTGEVLRTLPIENRVIVQGVNIRTRHVKPTQEGESGRIVTEEASVHASNVMLYSNKKKIASRVELVVEKDGSKKRRLKKTGELID</sequence>
<proteinExistence type="inferred from homology"/>
<keyword id="KW-1185">Reference proteome</keyword>
<keyword id="KW-0687">Ribonucleoprotein</keyword>
<keyword id="KW-0689">Ribosomal protein</keyword>
<keyword id="KW-0694">RNA-binding</keyword>
<keyword id="KW-0699">rRNA-binding</keyword>
<accession>Q7V534</accession>
<comment type="function">
    <text evidence="1">One of two assembly initiator proteins, it binds directly to the 5'-end of the 23S rRNA, where it nucleates assembly of the 50S subunit.</text>
</comment>
<comment type="function">
    <text evidence="1">One of the proteins that surrounds the polypeptide exit tunnel on the outside of the subunit.</text>
</comment>
<comment type="subunit">
    <text evidence="1">Part of the 50S ribosomal subunit.</text>
</comment>
<comment type="similarity">
    <text evidence="1">Belongs to the universal ribosomal protein uL24 family.</text>
</comment>
<reference key="1">
    <citation type="journal article" date="2003" name="Nature">
        <title>Genome divergence in two Prochlorococcus ecotypes reflects oceanic niche differentiation.</title>
        <authorList>
            <person name="Rocap G."/>
            <person name="Larimer F.W."/>
            <person name="Lamerdin J.E."/>
            <person name="Malfatti S."/>
            <person name="Chain P."/>
            <person name="Ahlgren N.A."/>
            <person name="Arellano A."/>
            <person name="Coleman M."/>
            <person name="Hauser L."/>
            <person name="Hess W.R."/>
            <person name="Johnson Z.I."/>
            <person name="Land M.L."/>
            <person name="Lindell D."/>
            <person name="Post A.F."/>
            <person name="Regala W."/>
            <person name="Shah M."/>
            <person name="Shaw S.L."/>
            <person name="Steglich C."/>
            <person name="Sullivan M.B."/>
            <person name="Ting C.S."/>
            <person name="Tolonen A."/>
            <person name="Webb E.A."/>
            <person name="Zinser E.R."/>
            <person name="Chisholm S.W."/>
        </authorList>
    </citation>
    <scope>NUCLEOTIDE SEQUENCE [LARGE SCALE GENOMIC DNA]</scope>
    <source>
        <strain>MIT 9313</strain>
    </source>
</reference>
<gene>
    <name evidence="1" type="primary">rplX</name>
    <name evidence="1" type="synonym">rpl24</name>
    <name type="ordered locus">PMT_1743</name>
</gene>